<evidence type="ECO:0000255" key="1">
    <source>
        <dbReference type="HAMAP-Rule" id="MF_00038"/>
    </source>
</evidence>
<keyword id="KW-0131">Cell cycle</keyword>
<keyword id="KW-0132">Cell division</keyword>
<keyword id="KW-0997">Cell inner membrane</keyword>
<keyword id="KW-1003">Cell membrane</keyword>
<keyword id="KW-0133">Cell shape</keyword>
<keyword id="KW-0961">Cell wall biogenesis/degradation</keyword>
<keyword id="KW-0460">Magnesium</keyword>
<keyword id="KW-0472">Membrane</keyword>
<keyword id="KW-0479">Metal-binding</keyword>
<keyword id="KW-0573">Peptidoglycan synthesis</keyword>
<keyword id="KW-0808">Transferase</keyword>
<keyword id="KW-0812">Transmembrane</keyword>
<keyword id="KW-1133">Transmembrane helix</keyword>
<dbReference type="EC" id="2.7.8.13" evidence="1"/>
<dbReference type="EMBL" id="AE001363">
    <property type="protein sequence ID" value="AAD19038.1"/>
    <property type="molecule type" value="Genomic_DNA"/>
</dbReference>
<dbReference type="EMBL" id="AE002161">
    <property type="protein sequence ID" value="AAF38746.1"/>
    <property type="molecule type" value="Genomic_DNA"/>
</dbReference>
<dbReference type="EMBL" id="BA000008">
    <property type="protein sequence ID" value="BAA99108.1"/>
    <property type="molecule type" value="Genomic_DNA"/>
</dbReference>
<dbReference type="EMBL" id="AE009440">
    <property type="protein sequence ID" value="AAP98861.1"/>
    <property type="molecule type" value="Genomic_DNA"/>
</dbReference>
<dbReference type="PIR" id="A81519">
    <property type="entry name" value="A81519"/>
</dbReference>
<dbReference type="PIR" id="B86603">
    <property type="entry name" value="B86603"/>
</dbReference>
<dbReference type="PIR" id="G72021">
    <property type="entry name" value="G72021"/>
</dbReference>
<dbReference type="RefSeq" id="NP_225095.1">
    <property type="nucleotide sequence ID" value="NC_000922.1"/>
</dbReference>
<dbReference type="RefSeq" id="WP_010883535.1">
    <property type="nucleotide sequence ID" value="NZ_LN847257.1"/>
</dbReference>
<dbReference type="RefSeq" id="WP_010892232.1">
    <property type="nucleotide sequence ID" value="NZ_LN846995.1"/>
</dbReference>
<dbReference type="SMR" id="Q9Z706"/>
<dbReference type="STRING" id="406984.CPK_ORF00312"/>
<dbReference type="GeneID" id="45050956"/>
<dbReference type="KEGG" id="cpa:CP_0966"/>
<dbReference type="KEGG" id="cpj:mraY"/>
<dbReference type="KEGG" id="cpn:CPn_0900"/>
<dbReference type="KEGG" id="cpt:CpB0932"/>
<dbReference type="PATRIC" id="fig|115713.3.peg.981"/>
<dbReference type="eggNOG" id="COG0472">
    <property type="taxonomic scope" value="Bacteria"/>
</dbReference>
<dbReference type="HOGENOM" id="CLU_023982_0_1_0"/>
<dbReference type="OrthoDB" id="9805475at2"/>
<dbReference type="UniPathway" id="UPA00219"/>
<dbReference type="Proteomes" id="UP000000583">
    <property type="component" value="Chromosome"/>
</dbReference>
<dbReference type="Proteomes" id="UP000000801">
    <property type="component" value="Chromosome"/>
</dbReference>
<dbReference type="GO" id="GO:0005886">
    <property type="term" value="C:plasma membrane"/>
    <property type="evidence" value="ECO:0007669"/>
    <property type="project" value="UniProtKB-SubCell"/>
</dbReference>
<dbReference type="GO" id="GO:0046872">
    <property type="term" value="F:metal ion binding"/>
    <property type="evidence" value="ECO:0007669"/>
    <property type="project" value="UniProtKB-KW"/>
</dbReference>
<dbReference type="GO" id="GO:0008963">
    <property type="term" value="F:phospho-N-acetylmuramoyl-pentapeptide-transferase activity"/>
    <property type="evidence" value="ECO:0007669"/>
    <property type="project" value="UniProtKB-UniRule"/>
</dbReference>
<dbReference type="GO" id="GO:0051992">
    <property type="term" value="F:UDP-N-acetylmuramoyl-L-alanyl-D-glutamyl-meso-2,6-diaminopimelyl-D-alanyl-D-alanine:undecaprenyl-phosphate transferase activity"/>
    <property type="evidence" value="ECO:0007669"/>
    <property type="project" value="RHEA"/>
</dbReference>
<dbReference type="GO" id="GO:0051301">
    <property type="term" value="P:cell division"/>
    <property type="evidence" value="ECO:0007669"/>
    <property type="project" value="UniProtKB-KW"/>
</dbReference>
<dbReference type="GO" id="GO:0071555">
    <property type="term" value="P:cell wall organization"/>
    <property type="evidence" value="ECO:0007669"/>
    <property type="project" value="UniProtKB-KW"/>
</dbReference>
<dbReference type="GO" id="GO:0009252">
    <property type="term" value="P:peptidoglycan biosynthetic process"/>
    <property type="evidence" value="ECO:0007669"/>
    <property type="project" value="UniProtKB-UniRule"/>
</dbReference>
<dbReference type="GO" id="GO:0008360">
    <property type="term" value="P:regulation of cell shape"/>
    <property type="evidence" value="ECO:0007669"/>
    <property type="project" value="UniProtKB-KW"/>
</dbReference>
<dbReference type="CDD" id="cd06852">
    <property type="entry name" value="GT_MraY"/>
    <property type="match status" value="1"/>
</dbReference>
<dbReference type="HAMAP" id="MF_00038">
    <property type="entry name" value="MraY"/>
    <property type="match status" value="1"/>
</dbReference>
<dbReference type="InterPro" id="IPR000715">
    <property type="entry name" value="Glycosyl_transferase_4"/>
</dbReference>
<dbReference type="InterPro" id="IPR003524">
    <property type="entry name" value="PNAcMuramoyl-5peptid_Trfase"/>
</dbReference>
<dbReference type="InterPro" id="IPR018480">
    <property type="entry name" value="PNAcMuramoyl-5peptid_Trfase_CS"/>
</dbReference>
<dbReference type="NCBIfam" id="TIGR00445">
    <property type="entry name" value="mraY"/>
    <property type="match status" value="1"/>
</dbReference>
<dbReference type="PANTHER" id="PTHR22926">
    <property type="entry name" value="PHOSPHO-N-ACETYLMURAMOYL-PENTAPEPTIDE-TRANSFERASE"/>
    <property type="match status" value="1"/>
</dbReference>
<dbReference type="PANTHER" id="PTHR22926:SF5">
    <property type="entry name" value="PHOSPHO-N-ACETYLMURAMOYL-PENTAPEPTIDE-TRANSFERASE HOMOLOG"/>
    <property type="match status" value="1"/>
</dbReference>
<dbReference type="Pfam" id="PF00953">
    <property type="entry name" value="Glycos_transf_4"/>
    <property type="match status" value="1"/>
</dbReference>
<dbReference type="PROSITE" id="PS01347">
    <property type="entry name" value="MRAY_1"/>
    <property type="match status" value="1"/>
</dbReference>
<dbReference type="PROSITE" id="PS01348">
    <property type="entry name" value="MRAY_2"/>
    <property type="match status" value="1"/>
</dbReference>
<organism>
    <name type="scientific">Chlamydia pneumoniae</name>
    <name type="common">Chlamydophila pneumoniae</name>
    <dbReference type="NCBI Taxonomy" id="83558"/>
    <lineage>
        <taxon>Bacteria</taxon>
        <taxon>Pseudomonadati</taxon>
        <taxon>Chlamydiota</taxon>
        <taxon>Chlamydiia</taxon>
        <taxon>Chlamydiales</taxon>
        <taxon>Chlamydiaceae</taxon>
        <taxon>Chlamydia/Chlamydophila group</taxon>
        <taxon>Chlamydia</taxon>
    </lineage>
</organism>
<sequence>MIPLIPMFLKQSLFFSLALTGMTTLVLTVSLGVPVMKWLKRKNYRDYIHKEYCEKLEMLHKDKAEVPTGGGVLLFISLIASLLVWLPWGKFSTWFFIILLTCYAGLGWYDDRIKIKRKQGHGLKAKHKFMVQIAIAAFTLIALPYIYGSTEPLWTLKIPFMEGMLSLPFWLGKVFCLGLALVAIIGTSNAVNLTDGLDGLAAGTMSFAALGFIFVALRSSTIPIAQDVAYVLAALVGACIGFLWYNGFPAQLFMGDTGSLLLGGLLGSCAVMLRAECILVVIGGVFVAEAGSVILQVLSCRLRKKRLFLCSPLHHHYEYQGLPETKIVMRFWIFSFVCAGLGIAAVLWR</sequence>
<proteinExistence type="inferred from homology"/>
<feature type="chain" id="PRO_0000108806" description="Phospho-N-acetylmuramoyl-pentapeptide-transferase">
    <location>
        <begin position="1"/>
        <end position="349"/>
    </location>
</feature>
<feature type="transmembrane region" description="Helical" evidence="1">
    <location>
        <begin position="13"/>
        <end position="33"/>
    </location>
</feature>
<feature type="transmembrane region" description="Helical" evidence="1">
    <location>
        <begin position="69"/>
        <end position="89"/>
    </location>
</feature>
<feature type="transmembrane region" description="Helical" evidence="1">
    <location>
        <begin position="91"/>
        <end position="111"/>
    </location>
</feature>
<feature type="transmembrane region" description="Helical" evidence="1">
    <location>
        <begin position="129"/>
        <end position="149"/>
    </location>
</feature>
<feature type="transmembrane region" description="Helical" evidence="1">
    <location>
        <begin position="165"/>
        <end position="185"/>
    </location>
</feature>
<feature type="transmembrane region" description="Helical" evidence="1">
    <location>
        <begin position="197"/>
        <end position="217"/>
    </location>
</feature>
<feature type="transmembrane region" description="Helical" evidence="1">
    <location>
        <begin position="228"/>
        <end position="248"/>
    </location>
</feature>
<feature type="transmembrane region" description="Helical" evidence="1">
    <location>
        <begin position="252"/>
        <end position="272"/>
    </location>
</feature>
<feature type="transmembrane region" description="Helical" evidence="1">
    <location>
        <begin position="278"/>
        <end position="298"/>
    </location>
</feature>
<feature type="transmembrane region" description="Helical" evidence="1">
    <location>
        <begin position="327"/>
        <end position="347"/>
    </location>
</feature>
<feature type="sequence variant" description="In strain: CWL029 and TW-183.">
    <original>S</original>
    <variation>A</variation>
    <location>
        <position position="30"/>
    </location>
</feature>
<comment type="function">
    <text evidence="1">Catalyzes the initial step of the lipid cycle reactions in the biosynthesis of the cell wall peptidoglycan: transfers peptidoglycan precursor phospho-MurNAc-pentapeptide from UDP-MurNAc-pentapeptide onto the lipid carrier undecaprenyl phosphate, yielding undecaprenyl-pyrophosphoryl-MurNAc-pentapeptide, known as lipid I.</text>
</comment>
<comment type="catalytic activity">
    <reaction evidence="1">
        <text>UDP-N-acetyl-alpha-D-muramoyl-L-alanyl-gamma-D-glutamyl-meso-2,6-diaminopimeloyl-D-alanyl-D-alanine + di-trans,octa-cis-undecaprenyl phosphate = di-trans,octa-cis-undecaprenyl diphospho-N-acetyl-alpha-D-muramoyl-L-alanyl-D-glutamyl-meso-2,6-diaminopimeloyl-D-alanyl-D-alanine + UMP</text>
        <dbReference type="Rhea" id="RHEA:28386"/>
        <dbReference type="ChEBI" id="CHEBI:57865"/>
        <dbReference type="ChEBI" id="CHEBI:60392"/>
        <dbReference type="ChEBI" id="CHEBI:61386"/>
        <dbReference type="ChEBI" id="CHEBI:61387"/>
        <dbReference type="EC" id="2.7.8.13"/>
    </reaction>
</comment>
<comment type="cofactor">
    <cofactor evidence="1">
        <name>Mg(2+)</name>
        <dbReference type="ChEBI" id="CHEBI:18420"/>
    </cofactor>
</comment>
<comment type="pathway">
    <text evidence="1">Cell wall biogenesis; peptidoglycan biosynthesis.</text>
</comment>
<comment type="subcellular location">
    <subcellularLocation>
        <location evidence="1">Cell inner membrane</location>
        <topology evidence="1">Multi-pass membrane protein</topology>
    </subcellularLocation>
</comment>
<comment type="similarity">
    <text evidence="1">Belongs to the glycosyltransferase 4 family. MraY subfamily.</text>
</comment>
<protein>
    <recommendedName>
        <fullName evidence="1">Phospho-N-acetylmuramoyl-pentapeptide-transferase</fullName>
        <ecNumber evidence="1">2.7.8.13</ecNumber>
    </recommendedName>
    <alternativeName>
        <fullName evidence="1">UDP-MurNAc-pentapeptide phosphotransferase</fullName>
    </alternativeName>
</protein>
<reference key="1">
    <citation type="journal article" date="1999" name="Nat. Genet.">
        <title>Comparative genomes of Chlamydia pneumoniae and C. trachomatis.</title>
        <authorList>
            <person name="Kalman S."/>
            <person name="Mitchell W.P."/>
            <person name="Marathe R."/>
            <person name="Lammel C.J."/>
            <person name="Fan J."/>
            <person name="Hyman R.W."/>
            <person name="Olinger L."/>
            <person name="Grimwood J."/>
            <person name="Davis R.W."/>
            <person name="Stephens R.S."/>
        </authorList>
    </citation>
    <scope>NUCLEOTIDE SEQUENCE [LARGE SCALE GENOMIC DNA]</scope>
    <source>
        <strain>CWL029</strain>
    </source>
</reference>
<reference key="2">
    <citation type="journal article" date="2000" name="Nucleic Acids Res.">
        <title>Genome sequences of Chlamydia trachomatis MoPn and Chlamydia pneumoniae AR39.</title>
        <authorList>
            <person name="Read T.D."/>
            <person name="Brunham R.C."/>
            <person name="Shen C."/>
            <person name="Gill S.R."/>
            <person name="Heidelberg J.F."/>
            <person name="White O."/>
            <person name="Hickey E.K."/>
            <person name="Peterson J.D."/>
            <person name="Utterback T.R."/>
            <person name="Berry K.J."/>
            <person name="Bass S."/>
            <person name="Linher K.D."/>
            <person name="Weidman J.F."/>
            <person name="Khouri H.M."/>
            <person name="Craven B."/>
            <person name="Bowman C."/>
            <person name="Dodson R.J."/>
            <person name="Gwinn M.L."/>
            <person name="Nelson W.C."/>
            <person name="DeBoy R.T."/>
            <person name="Kolonay J.F."/>
            <person name="McClarty G."/>
            <person name="Salzberg S.L."/>
            <person name="Eisen J.A."/>
            <person name="Fraser C.M."/>
        </authorList>
    </citation>
    <scope>NUCLEOTIDE SEQUENCE [LARGE SCALE GENOMIC DNA]</scope>
    <source>
        <strain>AR39</strain>
    </source>
</reference>
<reference key="3">
    <citation type="journal article" date="2000" name="Nucleic Acids Res.">
        <title>Comparison of whole genome sequences of Chlamydia pneumoniae J138 from Japan and CWL029 from USA.</title>
        <authorList>
            <person name="Shirai M."/>
            <person name="Hirakawa H."/>
            <person name="Kimoto M."/>
            <person name="Tabuchi M."/>
            <person name="Kishi F."/>
            <person name="Ouchi K."/>
            <person name="Shiba T."/>
            <person name="Ishii K."/>
            <person name="Hattori M."/>
            <person name="Kuhara S."/>
            <person name="Nakazawa T."/>
        </authorList>
    </citation>
    <scope>NUCLEOTIDE SEQUENCE [LARGE SCALE GENOMIC DNA]</scope>
    <source>
        <strain>J138</strain>
    </source>
</reference>
<reference key="4">
    <citation type="submission" date="2002-05" db="EMBL/GenBank/DDBJ databases">
        <title>The genome sequence of Chlamydia pneumoniae TW183 and comparison with other Chlamydia strains based on whole genome sequence analysis.</title>
        <authorList>
            <person name="Geng M.M."/>
            <person name="Schuhmacher A."/>
            <person name="Muehldorfer I."/>
            <person name="Bensch K.W."/>
            <person name="Schaefer K.P."/>
            <person name="Schneider S."/>
            <person name="Pohl T."/>
            <person name="Essig A."/>
            <person name="Marre R."/>
            <person name="Melchers K."/>
        </authorList>
    </citation>
    <scope>NUCLEOTIDE SEQUENCE [LARGE SCALE GENOMIC DNA]</scope>
    <source>
        <strain>TW-183</strain>
    </source>
</reference>
<name>MRAY_CHLPN</name>
<gene>
    <name evidence="1" type="primary">mraY</name>
    <name type="ordered locus">CPn_0900</name>
    <name type="ordered locus">CP_0966</name>
    <name type="ordered locus">CpB0932</name>
</gene>
<accession>Q9Z706</accession>
<accession>Q9JS12</accession>